<proteinExistence type="predicted"/>
<evidence type="ECO:0000255" key="1">
    <source>
        <dbReference type="PROSITE-ProRule" id="PRU01340"/>
    </source>
</evidence>
<feature type="chain" id="PRO_0000243987" description="Uncharacterized protein R217">
    <location>
        <begin position="1"/>
        <end position="732"/>
    </location>
</feature>
<feature type="domain" description="TR mART core" evidence="1">
    <location>
        <begin position="163"/>
        <end position="390"/>
    </location>
</feature>
<feature type="active site" evidence="1">
    <location>
        <position position="285"/>
    </location>
</feature>
<feature type="active site" evidence="1">
    <location>
        <position position="309"/>
    </location>
</feature>
<feature type="active site" evidence="1">
    <location>
        <position position="354"/>
    </location>
</feature>
<accession>Q5UQB2</accession>
<reference key="1">
    <citation type="journal article" date="2004" name="Science">
        <title>The 1.2-megabase genome sequence of Mimivirus.</title>
        <authorList>
            <person name="Raoult D."/>
            <person name="Audic S."/>
            <person name="Robert C."/>
            <person name="Abergel C."/>
            <person name="Renesto P."/>
            <person name="Ogata H."/>
            <person name="La Scola B."/>
            <person name="Susan M."/>
            <person name="Claverie J.-M."/>
        </authorList>
    </citation>
    <scope>NUCLEOTIDE SEQUENCE [LARGE SCALE GENOMIC DNA]</scope>
    <source>
        <strain>Rowbotham-Bradford</strain>
    </source>
</reference>
<dbReference type="EMBL" id="AY653733">
    <property type="protein sequence ID" value="AAV50490.1"/>
    <property type="molecule type" value="Genomic_DNA"/>
</dbReference>
<dbReference type="KEGG" id="vg:9924824"/>
<dbReference type="OrthoDB" id="1860at10239"/>
<dbReference type="Proteomes" id="UP000001134">
    <property type="component" value="Genome"/>
</dbReference>
<dbReference type="GO" id="GO:0005576">
    <property type="term" value="C:extracellular region"/>
    <property type="evidence" value="ECO:0007669"/>
    <property type="project" value="InterPro"/>
</dbReference>
<dbReference type="Gene3D" id="3.90.176.10">
    <property type="entry name" value="Toxin ADP-ribosyltransferase, Chain A, domain 1"/>
    <property type="match status" value="1"/>
</dbReference>
<dbReference type="InterPro" id="IPR003540">
    <property type="entry name" value="ADP-ribosyltransferase"/>
</dbReference>
<dbReference type="Pfam" id="PF03496">
    <property type="entry name" value="ADPrib_exo_Tox"/>
    <property type="match status" value="1"/>
</dbReference>
<dbReference type="SUPFAM" id="SSF56399">
    <property type="entry name" value="ADP-ribosylation"/>
    <property type="match status" value="1"/>
</dbReference>
<dbReference type="PROSITE" id="PS51996">
    <property type="entry name" value="TR_MART"/>
    <property type="match status" value="1"/>
</dbReference>
<keyword id="KW-1185">Reference proteome</keyword>
<name>YR217_MIMIV</name>
<organism>
    <name type="scientific">Acanthamoeba polyphaga mimivirus</name>
    <name type="common">APMV</name>
    <dbReference type="NCBI Taxonomy" id="212035"/>
    <lineage>
        <taxon>Viruses</taxon>
        <taxon>Varidnaviria</taxon>
        <taxon>Bamfordvirae</taxon>
        <taxon>Nucleocytoviricota</taxon>
        <taxon>Megaviricetes</taxon>
        <taxon>Imitervirales</taxon>
        <taxon>Mimiviridae</taxon>
        <taxon>Megamimivirinae</taxon>
        <taxon>Mimivirus</taxon>
        <taxon>Mimivirus bradfordmassiliense</taxon>
    </lineage>
</organism>
<sequence>MSYYYVPISSPYQIESTEYIDDFVTMLFDGSIEFINDEQRKQLKLPENYIQSVRENISLYSDRVPLYDIGSNHIFLIHRDNVYPRIYFENYRFIDQNFYNDLKNIKKPTSIDKNNLRILSHYDLSKLYTTYMKIFYDSFVVNSYITHCQRPSFFSGMEHIRPYYTINELNYLAYDWNLTNKLSLTTSEINSFCKKISQYDIPAETLLDHQMYIYDSKAIGLVKHYSLFGSYYMNYYLRKNKCCLPGEINDDMTIVRNLYLENQIEIMIRLIKNAPGFTKSHTVYRFVETDDYLKHLNIGDIYQDSSFMSTTRNPFYYKENYAFGYILIKITIPKKIKGTGLCIEAYSNFPNEEEIVLPPTTRYRLVNYMENQELENFQNVFGIVAKKKYEFEWVGNDYIDKADFEIKIDIPNSIIPKKNFVDLKELINDDNIKNLSISDRLKYFRDTYSSVNNQFVCQIGNYEYIFNFEAYNSTSVYKPFFYYEINDGIMVTTSNPKYGNINILMELGPEIHVNYYFRYSVTDPSIVVDLNRSEWIEWLSVFSYVIGSRNVVIHSNYVLQYDKSDTIKQKQMKTRYTFSQNIYLYLKNGTKFFEFDEVVPNFDYARLDYLFGYNVFDVIKPTDRDELYRITQSSGKSNMGDLYIYIIENHPKLIRSIEDKMDIVYNYNDNINPFKNISYNLDAWRYLYDHYYINHIPSEKEFTIKKGSFKKLIGSKKIVKFQNRLRTYLMSQ</sequence>
<gene>
    <name type="ordered locus">MIMI_R217</name>
</gene>
<organismHost>
    <name type="scientific">Acanthamoeba polyphaga</name>
    <name type="common">Amoeba</name>
    <dbReference type="NCBI Taxonomy" id="5757"/>
</organismHost>
<protein>
    <recommendedName>
        <fullName>Uncharacterized protein R217</fullName>
    </recommendedName>
</protein>